<feature type="chain" id="PRO_1000211855" description="Nitrogenase iron protein">
    <location>
        <begin position="1"/>
        <end position="274"/>
    </location>
</feature>
<feature type="binding site" evidence="1">
    <location>
        <begin position="8"/>
        <end position="15"/>
    </location>
    <ligand>
        <name>ATP</name>
        <dbReference type="ChEBI" id="CHEBI:30616"/>
    </ligand>
</feature>
<feature type="binding site" evidence="1">
    <location>
        <position position="94"/>
    </location>
    <ligand>
        <name>[4Fe-4S] cluster</name>
        <dbReference type="ChEBI" id="CHEBI:49883"/>
        <note>ligand shared between dimeric partners</note>
    </ligand>
</feature>
<feature type="binding site" evidence="1">
    <location>
        <position position="131"/>
    </location>
    <ligand>
        <name>[4Fe-4S] cluster</name>
        <dbReference type="ChEBI" id="CHEBI:49883"/>
        <note>ligand shared between dimeric partners</note>
    </ligand>
</feature>
<feature type="modified residue" description="ADP-ribosylarginine; by dinitrogenase reductase ADP-ribosyltransferase" evidence="1">
    <location>
        <position position="97"/>
    </location>
</feature>
<gene>
    <name evidence="1" type="primary">nifH</name>
    <name type="ordered locus">Clim_0685</name>
</gene>
<protein>
    <recommendedName>
        <fullName evidence="1">Nitrogenase iron protein</fullName>
        <ecNumber evidence="1">1.18.6.1</ecNumber>
    </recommendedName>
    <alternativeName>
        <fullName evidence="1">Nitrogenase Fe protein</fullName>
    </alternativeName>
    <alternativeName>
        <fullName evidence="1">Nitrogenase component II</fullName>
    </alternativeName>
    <alternativeName>
        <fullName evidence="1">Nitrogenase reductase</fullName>
    </alternativeName>
</protein>
<organism>
    <name type="scientific">Chlorobium limicola (strain DSM 245 / NBRC 103803 / 6330)</name>
    <dbReference type="NCBI Taxonomy" id="290315"/>
    <lineage>
        <taxon>Bacteria</taxon>
        <taxon>Pseudomonadati</taxon>
        <taxon>Chlorobiota</taxon>
        <taxon>Chlorobiia</taxon>
        <taxon>Chlorobiales</taxon>
        <taxon>Chlorobiaceae</taxon>
        <taxon>Chlorobium/Pelodictyon group</taxon>
        <taxon>Chlorobium</taxon>
    </lineage>
</organism>
<comment type="function">
    <text evidence="1">The key enzymatic reactions in nitrogen fixation are catalyzed by the nitrogenase complex, which has 2 components: the iron protein and the molybdenum-iron protein.</text>
</comment>
<comment type="catalytic activity">
    <reaction evidence="1">
        <text>N2 + 8 reduced [2Fe-2S]-[ferredoxin] + 16 ATP + 16 H2O = H2 + 8 oxidized [2Fe-2S]-[ferredoxin] + 2 NH4(+) + 16 ADP + 16 phosphate + 6 H(+)</text>
        <dbReference type="Rhea" id="RHEA:21448"/>
        <dbReference type="Rhea" id="RHEA-COMP:10000"/>
        <dbReference type="Rhea" id="RHEA-COMP:10001"/>
        <dbReference type="ChEBI" id="CHEBI:15377"/>
        <dbReference type="ChEBI" id="CHEBI:15378"/>
        <dbReference type="ChEBI" id="CHEBI:17997"/>
        <dbReference type="ChEBI" id="CHEBI:18276"/>
        <dbReference type="ChEBI" id="CHEBI:28938"/>
        <dbReference type="ChEBI" id="CHEBI:30616"/>
        <dbReference type="ChEBI" id="CHEBI:33737"/>
        <dbReference type="ChEBI" id="CHEBI:33738"/>
        <dbReference type="ChEBI" id="CHEBI:43474"/>
        <dbReference type="ChEBI" id="CHEBI:456216"/>
        <dbReference type="EC" id="1.18.6.1"/>
    </reaction>
</comment>
<comment type="cofactor">
    <cofactor evidence="1">
        <name>[4Fe-4S] cluster</name>
        <dbReference type="ChEBI" id="CHEBI:49883"/>
    </cofactor>
    <text evidence="1">Binds 1 [4Fe-4S] cluster per dimer.</text>
</comment>
<comment type="subunit">
    <text evidence="1">Homodimer.</text>
</comment>
<comment type="PTM">
    <text evidence="1">The reversible ADP-ribosylation of Arg-97 inactivates the nitrogenase reductase and regulates nitrogenase activity.</text>
</comment>
<comment type="similarity">
    <text evidence="1">Belongs to the NifH/BchL/ChlL family.</text>
</comment>
<reference key="1">
    <citation type="submission" date="2008-05" db="EMBL/GenBank/DDBJ databases">
        <title>Complete sequence of Chlorobium limicola DSM 245.</title>
        <authorList>
            <consortium name="US DOE Joint Genome Institute"/>
            <person name="Lucas S."/>
            <person name="Copeland A."/>
            <person name="Lapidus A."/>
            <person name="Glavina del Rio T."/>
            <person name="Dalin E."/>
            <person name="Tice H."/>
            <person name="Bruce D."/>
            <person name="Goodwin L."/>
            <person name="Pitluck S."/>
            <person name="Schmutz J."/>
            <person name="Larimer F."/>
            <person name="Land M."/>
            <person name="Hauser L."/>
            <person name="Kyrpides N."/>
            <person name="Ovchinnikova G."/>
            <person name="Zhao F."/>
            <person name="Li T."/>
            <person name="Liu Z."/>
            <person name="Overmann J."/>
            <person name="Bryant D.A."/>
            <person name="Richardson P."/>
        </authorList>
    </citation>
    <scope>NUCLEOTIDE SEQUENCE [LARGE SCALE GENOMIC DNA]</scope>
    <source>
        <strain>DSM 245 / NBRC 103803 / 6330</strain>
    </source>
</reference>
<name>NIFH_CHLL2</name>
<proteinExistence type="inferred from homology"/>
<accession>B3EH88</accession>
<evidence type="ECO:0000255" key="1">
    <source>
        <dbReference type="HAMAP-Rule" id="MF_00533"/>
    </source>
</evidence>
<sequence length="274" mass="30184">MRKVAIYGKGGIGKSTTTQNTVAGLAEMGKKVMVVGCDPKADSTRLLLGGLQQKTVLDTLREEGEEVELEDIIKEGYRNTRCTESGGPEPGVGCAGRGIITSVNLLEQLGAYDEEWDLDYVFYDVLGDVVCGGFAMPIRDGKAEEIYIVCSGEMMAMYAANNICKGILKYADAGGVRLGGLICNSRKVDNEREMIEELAKKIGTQMIHFVPRDNFVQRAEINRKTVIDYDPTHGQADEYRALARKIDENEMFVIPKPLEIEELESLLIEFGIAN</sequence>
<keyword id="KW-0004">4Fe-4S</keyword>
<keyword id="KW-0013">ADP-ribosylation</keyword>
<keyword id="KW-0067">ATP-binding</keyword>
<keyword id="KW-0408">Iron</keyword>
<keyword id="KW-0411">Iron-sulfur</keyword>
<keyword id="KW-0479">Metal-binding</keyword>
<keyword id="KW-0535">Nitrogen fixation</keyword>
<keyword id="KW-0547">Nucleotide-binding</keyword>
<keyword id="KW-0560">Oxidoreductase</keyword>
<dbReference type="EC" id="1.18.6.1" evidence="1"/>
<dbReference type="EMBL" id="CP001097">
    <property type="protein sequence ID" value="ACD89768.1"/>
    <property type="molecule type" value="Genomic_DNA"/>
</dbReference>
<dbReference type="RefSeq" id="WP_012465649.1">
    <property type="nucleotide sequence ID" value="NC_010803.1"/>
</dbReference>
<dbReference type="SMR" id="B3EH88"/>
<dbReference type="STRING" id="290315.Clim_0685"/>
<dbReference type="KEGG" id="cli:Clim_0685"/>
<dbReference type="eggNOG" id="COG1348">
    <property type="taxonomic scope" value="Bacteria"/>
</dbReference>
<dbReference type="HOGENOM" id="CLU_059373_0_0_10"/>
<dbReference type="OrthoDB" id="9778641at2"/>
<dbReference type="Proteomes" id="UP000008841">
    <property type="component" value="Chromosome"/>
</dbReference>
<dbReference type="GO" id="GO:0051539">
    <property type="term" value="F:4 iron, 4 sulfur cluster binding"/>
    <property type="evidence" value="ECO:0007669"/>
    <property type="project" value="UniProtKB-KW"/>
</dbReference>
<dbReference type="GO" id="GO:0005524">
    <property type="term" value="F:ATP binding"/>
    <property type="evidence" value="ECO:0007669"/>
    <property type="project" value="UniProtKB-UniRule"/>
</dbReference>
<dbReference type="GO" id="GO:0046872">
    <property type="term" value="F:metal ion binding"/>
    <property type="evidence" value="ECO:0007669"/>
    <property type="project" value="UniProtKB-KW"/>
</dbReference>
<dbReference type="GO" id="GO:0016163">
    <property type="term" value="F:nitrogenase activity"/>
    <property type="evidence" value="ECO:0007669"/>
    <property type="project" value="UniProtKB-UniRule"/>
</dbReference>
<dbReference type="GO" id="GO:0009399">
    <property type="term" value="P:nitrogen fixation"/>
    <property type="evidence" value="ECO:0007669"/>
    <property type="project" value="UniProtKB-UniRule"/>
</dbReference>
<dbReference type="CDD" id="cd02040">
    <property type="entry name" value="NifH"/>
    <property type="match status" value="1"/>
</dbReference>
<dbReference type="Gene3D" id="3.40.50.300">
    <property type="entry name" value="P-loop containing nucleotide triphosphate hydrolases"/>
    <property type="match status" value="1"/>
</dbReference>
<dbReference type="HAMAP" id="MF_00533">
    <property type="entry name" value="NifH"/>
    <property type="match status" value="1"/>
</dbReference>
<dbReference type="InterPro" id="IPR030655">
    <property type="entry name" value="NifH/chlL_CS"/>
</dbReference>
<dbReference type="InterPro" id="IPR000392">
    <property type="entry name" value="NifH/frxC"/>
</dbReference>
<dbReference type="InterPro" id="IPR005977">
    <property type="entry name" value="Nitrogenase_Fe_NifH"/>
</dbReference>
<dbReference type="InterPro" id="IPR027417">
    <property type="entry name" value="P-loop_NTPase"/>
</dbReference>
<dbReference type="NCBIfam" id="TIGR01287">
    <property type="entry name" value="nifH"/>
    <property type="match status" value="1"/>
</dbReference>
<dbReference type="PANTHER" id="PTHR42864">
    <property type="entry name" value="LIGHT-INDEPENDENT PROTOCHLOROPHYLLIDE REDUCTASE IRON-SULFUR ATP-BINDING PROTEIN"/>
    <property type="match status" value="1"/>
</dbReference>
<dbReference type="PANTHER" id="PTHR42864:SF2">
    <property type="entry name" value="LIGHT-INDEPENDENT PROTOCHLOROPHYLLIDE REDUCTASE IRON-SULFUR ATP-BINDING PROTEIN"/>
    <property type="match status" value="1"/>
</dbReference>
<dbReference type="Pfam" id="PF00142">
    <property type="entry name" value="Fer4_NifH"/>
    <property type="match status" value="1"/>
</dbReference>
<dbReference type="PIRSF" id="PIRSF000363">
    <property type="entry name" value="Nitrogenase_iron"/>
    <property type="match status" value="1"/>
</dbReference>
<dbReference type="PRINTS" id="PR00091">
    <property type="entry name" value="NITROGNASEII"/>
</dbReference>
<dbReference type="SUPFAM" id="SSF52540">
    <property type="entry name" value="P-loop containing nucleoside triphosphate hydrolases"/>
    <property type="match status" value="1"/>
</dbReference>
<dbReference type="PROSITE" id="PS00746">
    <property type="entry name" value="NIFH_FRXC_1"/>
    <property type="match status" value="1"/>
</dbReference>
<dbReference type="PROSITE" id="PS00692">
    <property type="entry name" value="NIFH_FRXC_2"/>
    <property type="match status" value="1"/>
</dbReference>
<dbReference type="PROSITE" id="PS51026">
    <property type="entry name" value="NIFH_FRXC_3"/>
    <property type="match status" value="1"/>
</dbReference>